<dbReference type="EMBL" id="AE016817">
    <property type="protein sequence ID" value="AAS51770.2"/>
    <property type="molecule type" value="Genomic_DNA"/>
</dbReference>
<dbReference type="RefSeq" id="NP_983946.2">
    <property type="nucleotide sequence ID" value="NM_209299.2"/>
</dbReference>
<dbReference type="SMR" id="Q75AS0"/>
<dbReference type="FunCoup" id="Q75AS0">
    <property type="interactions" value="17"/>
</dbReference>
<dbReference type="EnsemblFungi" id="AAS51770">
    <property type="protein sequence ID" value="AAS51770"/>
    <property type="gene ID" value="AGOS_ADL150C"/>
</dbReference>
<dbReference type="GeneID" id="4620088"/>
<dbReference type="KEGG" id="ago:AGOS_ADL150C"/>
<dbReference type="eggNOG" id="ENOG502S2SD">
    <property type="taxonomic scope" value="Eukaryota"/>
</dbReference>
<dbReference type="HOGENOM" id="CLU_762843_0_0_1"/>
<dbReference type="InParanoid" id="Q75AS0"/>
<dbReference type="OrthoDB" id="4036304at2759"/>
<dbReference type="Proteomes" id="UP000000591">
    <property type="component" value="Chromosome IV"/>
</dbReference>
<dbReference type="GO" id="GO:0005737">
    <property type="term" value="C:cytoplasm"/>
    <property type="evidence" value="ECO:0007669"/>
    <property type="project" value="UniProtKB-SubCell"/>
</dbReference>
<dbReference type="InterPro" id="IPR031388">
    <property type="entry name" value="Tda11"/>
</dbReference>
<dbReference type="Pfam" id="PF17084">
    <property type="entry name" value="TDA11"/>
    <property type="match status" value="1"/>
</dbReference>
<reference key="1">
    <citation type="journal article" date="2004" name="Science">
        <title>The Ashbya gossypii genome as a tool for mapping the ancient Saccharomyces cerevisiae genome.</title>
        <authorList>
            <person name="Dietrich F.S."/>
            <person name="Voegeli S."/>
            <person name="Brachat S."/>
            <person name="Lerch A."/>
            <person name="Gates K."/>
            <person name="Steiner S."/>
            <person name="Mohr C."/>
            <person name="Poehlmann R."/>
            <person name="Luedi P."/>
            <person name="Choi S."/>
            <person name="Wing R.A."/>
            <person name="Flavier A."/>
            <person name="Gaffney T.D."/>
            <person name="Philippsen P."/>
        </authorList>
    </citation>
    <scope>NUCLEOTIDE SEQUENCE [LARGE SCALE GENOMIC DNA]</scope>
    <source>
        <strain>ATCC 10895 / CBS 109.51 / FGSC 9923 / NRRL Y-1056</strain>
    </source>
</reference>
<reference key="2">
    <citation type="journal article" date="2013" name="G3 (Bethesda)">
        <title>Genomes of Ashbya fungi isolated from insects reveal four mating-type loci, numerous translocations, lack of transposons, and distinct gene duplications.</title>
        <authorList>
            <person name="Dietrich F.S."/>
            <person name="Voegeli S."/>
            <person name="Kuo S."/>
            <person name="Philippsen P."/>
        </authorList>
    </citation>
    <scope>GENOME REANNOTATION</scope>
    <source>
        <strain>ATCC 10895 / CBS 109.51 / FGSC 9923 / NRRL Y-1056</strain>
    </source>
</reference>
<evidence type="ECO:0000250" key="1"/>
<evidence type="ECO:0000255" key="2"/>
<evidence type="ECO:0000256" key="3">
    <source>
        <dbReference type="SAM" id="MobiDB-lite"/>
    </source>
</evidence>
<evidence type="ECO:0000305" key="4"/>
<comment type="subcellular location">
    <subcellularLocation>
        <location evidence="1">Cytoplasm</location>
    </subcellularLocation>
</comment>
<comment type="similarity">
    <text evidence="4">Belongs to the TDA11 family.</text>
</comment>
<organism>
    <name type="scientific">Eremothecium gossypii (strain ATCC 10895 / CBS 109.51 / FGSC 9923 / NRRL Y-1056)</name>
    <name type="common">Yeast</name>
    <name type="synonym">Ashbya gossypii</name>
    <dbReference type="NCBI Taxonomy" id="284811"/>
    <lineage>
        <taxon>Eukaryota</taxon>
        <taxon>Fungi</taxon>
        <taxon>Dikarya</taxon>
        <taxon>Ascomycota</taxon>
        <taxon>Saccharomycotina</taxon>
        <taxon>Saccharomycetes</taxon>
        <taxon>Saccharomycetales</taxon>
        <taxon>Saccharomycetaceae</taxon>
        <taxon>Eremothecium</taxon>
    </lineage>
</organism>
<gene>
    <name type="primary">TDA11</name>
    <name type="ordered locus">ADL150C</name>
</gene>
<feature type="chain" id="PRO_0000410754" description="Topoisomerase I damage affected protein 11">
    <location>
        <begin position="1"/>
        <end position="364"/>
    </location>
</feature>
<feature type="region of interest" description="Disordered" evidence="3">
    <location>
        <begin position="1"/>
        <end position="81"/>
    </location>
</feature>
<feature type="region of interest" description="Disordered" evidence="3">
    <location>
        <begin position="94"/>
        <end position="121"/>
    </location>
</feature>
<feature type="region of interest" description="Disordered" evidence="3">
    <location>
        <begin position="263"/>
        <end position="305"/>
    </location>
</feature>
<feature type="region of interest" description="Disordered" evidence="3">
    <location>
        <begin position="324"/>
        <end position="352"/>
    </location>
</feature>
<feature type="coiled-coil region" evidence="2">
    <location>
        <begin position="139"/>
        <end position="181"/>
    </location>
</feature>
<feature type="compositionally biased region" description="Polar residues" evidence="3">
    <location>
        <begin position="24"/>
        <end position="33"/>
    </location>
</feature>
<feature type="compositionally biased region" description="Basic and acidic residues" evidence="3">
    <location>
        <begin position="290"/>
        <end position="305"/>
    </location>
</feature>
<name>TDA11_EREGS</name>
<proteinExistence type="inferred from homology"/>
<sequence>MEHNASDAVGTRDAGWQTDMCHRTSGTAEQGGSKNKGRGGRREQSHIRAYSSASADGYRMHRNHTGGAESPGAEQGTPPRRNSVLKRRSLIQTIMSPEGGAASPERGRRSVSLYSPASAGSDEGDVGAMLQTLATRELALLEQRKTVEDLRRALRLEERVLVAQARELEELKQRVARALDAGSPRAVLEPGAELPGAPGARESVWAKSMSFLNEFDQILQEGLEKRLGFDELMPSPATDATTPEADDRRGIWGLVSEFKAGLLGLSDSTPPPDAPAAYLEKQRNRSVGPEPRRTNTGDAVAEHSRDARYARKRDLHEQAYSPADAAAENGVVTGGRLGATPHSSGSIRKRCPPLSTSVEMQNYV</sequence>
<accession>Q75AS0</accession>
<keyword id="KW-0175">Coiled coil</keyword>
<keyword id="KW-0963">Cytoplasm</keyword>
<keyword id="KW-1185">Reference proteome</keyword>
<protein>
    <recommendedName>
        <fullName>Topoisomerase I damage affected protein 11</fullName>
    </recommendedName>
</protein>